<name>RL23_RAT</name>
<dbReference type="EMBL" id="X58200">
    <property type="protein sequence ID" value="CAA41177.1"/>
    <property type="molecule type" value="mRNA"/>
</dbReference>
<dbReference type="EMBL" id="BC058500">
    <property type="protein sequence ID" value="AAH58500.1"/>
    <property type="molecule type" value="mRNA"/>
</dbReference>
<dbReference type="PIR" id="JH0418">
    <property type="entry name" value="R5RT23"/>
</dbReference>
<dbReference type="RefSeq" id="NP_001007600.1">
    <property type="nucleotide sequence ID" value="NM_001007599.2"/>
</dbReference>
<dbReference type="SMR" id="P62832"/>
<dbReference type="BioGRID" id="247952">
    <property type="interactions" value="6"/>
</dbReference>
<dbReference type="FunCoup" id="P62832">
    <property type="interactions" value="2841"/>
</dbReference>
<dbReference type="IntAct" id="P62832">
    <property type="interactions" value="6"/>
</dbReference>
<dbReference type="MINT" id="P62832"/>
<dbReference type="STRING" id="10116.ENSRNOP00000005471"/>
<dbReference type="iPTMnet" id="P62832"/>
<dbReference type="PhosphoSitePlus" id="P62832"/>
<dbReference type="jPOST" id="P62832"/>
<dbReference type="PaxDb" id="10116-ENSRNOP00000005471"/>
<dbReference type="GeneID" id="29282"/>
<dbReference type="KEGG" id="rno:29282"/>
<dbReference type="UCSC" id="RGD:62067">
    <property type="organism name" value="rat"/>
</dbReference>
<dbReference type="AGR" id="RGD:62067"/>
<dbReference type="CTD" id="9349"/>
<dbReference type="RGD" id="62067">
    <property type="gene designation" value="Rpl23"/>
</dbReference>
<dbReference type="VEuPathDB" id="HostDB:ENSRNOG00000004107"/>
<dbReference type="eggNOG" id="KOG0901">
    <property type="taxonomic scope" value="Eukaryota"/>
</dbReference>
<dbReference type="HOGENOM" id="CLU_095071_3_0_1"/>
<dbReference type="InParanoid" id="P62832"/>
<dbReference type="OrthoDB" id="35196at9989"/>
<dbReference type="PhylomeDB" id="P62832"/>
<dbReference type="TreeFam" id="TF300913"/>
<dbReference type="Reactome" id="R-RNO-156827">
    <property type="pathway name" value="L13a-mediated translational silencing of Ceruloplasmin expression"/>
</dbReference>
<dbReference type="Reactome" id="R-RNO-1799339">
    <property type="pathway name" value="SRP-dependent cotranslational protein targeting to membrane"/>
</dbReference>
<dbReference type="Reactome" id="R-RNO-6791226">
    <property type="pathway name" value="Major pathway of rRNA processing in the nucleolus and cytosol"/>
</dbReference>
<dbReference type="Reactome" id="R-RNO-72689">
    <property type="pathway name" value="Formation of a pool of free 40S subunits"/>
</dbReference>
<dbReference type="Reactome" id="R-RNO-72706">
    <property type="pathway name" value="GTP hydrolysis and joining of the 60S ribosomal subunit"/>
</dbReference>
<dbReference type="Reactome" id="R-RNO-975956">
    <property type="pathway name" value="Nonsense Mediated Decay (NMD) independent of the Exon Junction Complex (EJC)"/>
</dbReference>
<dbReference type="Reactome" id="R-RNO-975957">
    <property type="pathway name" value="Nonsense Mediated Decay (NMD) enhanced by the Exon Junction Complex (EJC)"/>
</dbReference>
<dbReference type="PRO" id="PR:P62832"/>
<dbReference type="Proteomes" id="UP000002494">
    <property type="component" value="Chromosome 10"/>
</dbReference>
<dbReference type="Bgee" id="ENSRNOG00000004107">
    <property type="expression patterns" value="Expressed in thymus and 20 other cell types or tissues"/>
</dbReference>
<dbReference type="GO" id="GO:0005737">
    <property type="term" value="C:cytoplasm"/>
    <property type="evidence" value="ECO:0000266"/>
    <property type="project" value="RGD"/>
</dbReference>
<dbReference type="GO" id="GO:0098556">
    <property type="term" value="C:cytoplasmic side of rough endoplasmic reticulum membrane"/>
    <property type="evidence" value="ECO:0000266"/>
    <property type="project" value="RGD"/>
</dbReference>
<dbReference type="GO" id="GO:0022625">
    <property type="term" value="C:cytosolic large ribosomal subunit"/>
    <property type="evidence" value="ECO:0000314"/>
    <property type="project" value="RGD"/>
</dbReference>
<dbReference type="GO" id="GO:0022626">
    <property type="term" value="C:cytosolic ribosome"/>
    <property type="evidence" value="ECO:0000266"/>
    <property type="project" value="RGD"/>
</dbReference>
<dbReference type="GO" id="GO:0015934">
    <property type="term" value="C:large ribosomal subunit"/>
    <property type="evidence" value="ECO:0000266"/>
    <property type="project" value="RGD"/>
</dbReference>
<dbReference type="GO" id="GO:0005730">
    <property type="term" value="C:nucleolus"/>
    <property type="evidence" value="ECO:0000266"/>
    <property type="project" value="RGD"/>
</dbReference>
<dbReference type="GO" id="GO:0005654">
    <property type="term" value="C:nucleoplasm"/>
    <property type="evidence" value="ECO:0000266"/>
    <property type="project" value="RGD"/>
</dbReference>
<dbReference type="GO" id="GO:0014069">
    <property type="term" value="C:postsynaptic density"/>
    <property type="evidence" value="ECO:0000314"/>
    <property type="project" value="SynGO"/>
</dbReference>
<dbReference type="GO" id="GO:0032991">
    <property type="term" value="C:protein-containing complex"/>
    <property type="evidence" value="ECO:0000266"/>
    <property type="project" value="RGD"/>
</dbReference>
<dbReference type="GO" id="GO:0005840">
    <property type="term" value="C:ribosome"/>
    <property type="evidence" value="ECO:0000314"/>
    <property type="project" value="RGD"/>
</dbReference>
<dbReference type="GO" id="GO:0045202">
    <property type="term" value="C:synapse"/>
    <property type="evidence" value="ECO:0000266"/>
    <property type="project" value="RGD"/>
</dbReference>
<dbReference type="GO" id="GO:0070180">
    <property type="term" value="F:large ribosomal subunit rRNA binding"/>
    <property type="evidence" value="ECO:0000318"/>
    <property type="project" value="GO_Central"/>
</dbReference>
<dbReference type="GO" id="GO:0003735">
    <property type="term" value="F:structural constituent of ribosome"/>
    <property type="evidence" value="ECO:0000266"/>
    <property type="project" value="RGD"/>
</dbReference>
<dbReference type="GO" id="GO:0001223">
    <property type="term" value="F:transcription coactivator binding"/>
    <property type="evidence" value="ECO:0000266"/>
    <property type="project" value="RGD"/>
</dbReference>
<dbReference type="GO" id="GO:1990948">
    <property type="term" value="F:ubiquitin ligase inhibitor activity"/>
    <property type="evidence" value="ECO:0000266"/>
    <property type="project" value="RGD"/>
</dbReference>
<dbReference type="GO" id="GO:0031625">
    <property type="term" value="F:ubiquitin protein ligase binding"/>
    <property type="evidence" value="ECO:0000266"/>
    <property type="project" value="RGD"/>
</dbReference>
<dbReference type="GO" id="GO:0072717">
    <property type="term" value="P:cellular response to actinomycin D"/>
    <property type="evidence" value="ECO:0000266"/>
    <property type="project" value="RGD"/>
</dbReference>
<dbReference type="GO" id="GO:0070314">
    <property type="term" value="P:G1 to G0 transition"/>
    <property type="evidence" value="ECO:0000266"/>
    <property type="project" value="RGD"/>
</dbReference>
<dbReference type="GO" id="GO:0000122">
    <property type="term" value="P:negative regulation of transcription by RNA polymerase II"/>
    <property type="evidence" value="ECO:0000266"/>
    <property type="project" value="RGD"/>
</dbReference>
<dbReference type="GO" id="GO:2000059">
    <property type="term" value="P:negative regulation of ubiquitin-dependent protein catabolic process"/>
    <property type="evidence" value="ECO:0000266"/>
    <property type="project" value="RGD"/>
</dbReference>
<dbReference type="GO" id="GO:0008284">
    <property type="term" value="P:positive regulation of cell population proliferation"/>
    <property type="evidence" value="ECO:0000266"/>
    <property type="project" value="RGD"/>
</dbReference>
<dbReference type="GO" id="GO:0010628">
    <property type="term" value="P:positive regulation of gene expression"/>
    <property type="evidence" value="ECO:0000266"/>
    <property type="project" value="RGD"/>
</dbReference>
<dbReference type="GO" id="GO:1901798">
    <property type="term" value="P:positive regulation of signal transduction by p53 class mediator"/>
    <property type="evidence" value="ECO:0000266"/>
    <property type="project" value="RGD"/>
</dbReference>
<dbReference type="GO" id="GO:0050821">
    <property type="term" value="P:protein stabilization"/>
    <property type="evidence" value="ECO:0000266"/>
    <property type="project" value="RGD"/>
</dbReference>
<dbReference type="GO" id="GO:0032986">
    <property type="term" value="P:protein-DNA complex disassembly"/>
    <property type="evidence" value="ECO:0000266"/>
    <property type="project" value="RGD"/>
</dbReference>
<dbReference type="GO" id="GO:1903450">
    <property type="term" value="P:regulation of G1 to G0 transition"/>
    <property type="evidence" value="ECO:0000266"/>
    <property type="project" value="RGD"/>
</dbReference>
<dbReference type="GO" id="GO:0006412">
    <property type="term" value="P:translation"/>
    <property type="evidence" value="ECO:0007669"/>
    <property type="project" value="InterPro"/>
</dbReference>
<dbReference type="CDD" id="cd00337">
    <property type="entry name" value="Ribosomal_uL14"/>
    <property type="match status" value="1"/>
</dbReference>
<dbReference type="FunFam" id="2.40.150.20:FF:000003">
    <property type="entry name" value="60S ribosomal protein L23"/>
    <property type="match status" value="1"/>
</dbReference>
<dbReference type="Gene3D" id="2.40.150.20">
    <property type="entry name" value="Ribosomal protein L14"/>
    <property type="match status" value="1"/>
</dbReference>
<dbReference type="HAMAP" id="MF_01367">
    <property type="entry name" value="Ribosomal_uL14"/>
    <property type="match status" value="1"/>
</dbReference>
<dbReference type="InterPro" id="IPR000218">
    <property type="entry name" value="Ribosomal_uL14"/>
</dbReference>
<dbReference type="InterPro" id="IPR019972">
    <property type="entry name" value="Ribosomal_uL14_CS"/>
</dbReference>
<dbReference type="InterPro" id="IPR036853">
    <property type="entry name" value="Ribosomal_uL14_sf"/>
</dbReference>
<dbReference type="NCBIfam" id="NF006344">
    <property type="entry name" value="PRK08571.1"/>
    <property type="match status" value="1"/>
</dbReference>
<dbReference type="PANTHER" id="PTHR11761">
    <property type="entry name" value="50S/60S RIBOSOMAL PROTEIN L14/L23"/>
    <property type="match status" value="1"/>
</dbReference>
<dbReference type="PANTHER" id="PTHR11761:SF8">
    <property type="entry name" value="LARGE RIBOSOMAL SUBUNIT PROTEIN UL14"/>
    <property type="match status" value="1"/>
</dbReference>
<dbReference type="Pfam" id="PF00238">
    <property type="entry name" value="Ribosomal_L14"/>
    <property type="match status" value="1"/>
</dbReference>
<dbReference type="SMART" id="SM01374">
    <property type="entry name" value="Ribosomal_L14"/>
    <property type="match status" value="1"/>
</dbReference>
<dbReference type="SUPFAM" id="SSF50193">
    <property type="entry name" value="Ribosomal protein L14"/>
    <property type="match status" value="1"/>
</dbReference>
<dbReference type="PROSITE" id="PS00049">
    <property type="entry name" value="RIBOSOMAL_L14"/>
    <property type="match status" value="1"/>
</dbReference>
<sequence length="140" mass="14865">MSKRGRGGSSGAKFRISLGLPVGAVINCADNTGAKNLYIISVKGIKGRLNRLPAAGVGDMVMATVKKGKPELRKKVHPAVVIRQRKSYRRKDGVFLYFEDNAGVIVNNKGEMKGSAITGPVAKECADLWPRIASNAGSIA</sequence>
<protein>
    <recommendedName>
        <fullName evidence="2">Large ribosomal subunit protein uL14</fullName>
    </recommendedName>
    <alternativeName>
        <fullName>60S ribosomal protein L23</fullName>
    </alternativeName>
</protein>
<evidence type="ECO:0000250" key="1">
    <source>
        <dbReference type="UniProtKB" id="P62829"/>
    </source>
</evidence>
<evidence type="ECO:0000305" key="2"/>
<feature type="chain" id="PRO_0000128616" description="Large ribosomal subunit protein uL14">
    <location>
        <begin position="1"/>
        <end position="140"/>
    </location>
</feature>
<feature type="modified residue" description="Phosphoserine" evidence="1">
    <location>
        <position position="17"/>
    </location>
</feature>
<feature type="modified residue" description="Phosphotyrosine" evidence="1">
    <location>
        <position position="38"/>
    </location>
</feature>
<reference key="1">
    <citation type="journal article" date="1991" name="Biochem. Biophys. Res. Commun.">
        <title>The primary structure of rat ribosomal protein L23.</title>
        <authorList>
            <person name="Chan Y.-L."/>
            <person name="Paz V."/>
            <person name="Wool I.G."/>
        </authorList>
    </citation>
    <scope>NUCLEOTIDE SEQUENCE [MRNA]</scope>
    <source>
        <strain>Sprague-Dawley</strain>
        <tissue>Liver</tissue>
    </source>
</reference>
<reference key="2">
    <citation type="journal article" date="2004" name="Genome Res.">
        <title>The status, quality, and expansion of the NIH full-length cDNA project: the Mammalian Gene Collection (MGC).</title>
        <authorList>
            <consortium name="The MGC Project Team"/>
        </authorList>
    </citation>
    <scope>NUCLEOTIDE SEQUENCE [LARGE SCALE MRNA]</scope>
    <source>
        <tissue>Pituitary</tissue>
    </source>
</reference>
<organism>
    <name type="scientific">Rattus norvegicus</name>
    <name type="common">Rat</name>
    <dbReference type="NCBI Taxonomy" id="10116"/>
    <lineage>
        <taxon>Eukaryota</taxon>
        <taxon>Metazoa</taxon>
        <taxon>Chordata</taxon>
        <taxon>Craniata</taxon>
        <taxon>Vertebrata</taxon>
        <taxon>Euteleostomi</taxon>
        <taxon>Mammalia</taxon>
        <taxon>Eutheria</taxon>
        <taxon>Euarchontoglires</taxon>
        <taxon>Glires</taxon>
        <taxon>Rodentia</taxon>
        <taxon>Myomorpha</taxon>
        <taxon>Muroidea</taxon>
        <taxon>Muridae</taxon>
        <taxon>Murinae</taxon>
        <taxon>Rattus</taxon>
    </lineage>
</organism>
<keyword id="KW-0963">Cytoplasm</keyword>
<keyword id="KW-0597">Phosphoprotein</keyword>
<keyword id="KW-1185">Reference proteome</keyword>
<keyword id="KW-0687">Ribonucleoprotein</keyword>
<keyword id="KW-0689">Ribosomal protein</keyword>
<gene>
    <name type="primary">Rpl23</name>
</gene>
<comment type="function">
    <text evidence="1">Component of the large ribosomal subunit. The ribosome is a large ribonucleoprotein complex responsible for the synthesis of proteins in the cell.</text>
</comment>
<comment type="subunit">
    <text evidence="1">Component of the large ribosomal subunit.</text>
</comment>
<comment type="subcellular location">
    <subcellularLocation>
        <location evidence="1">Cytoplasm</location>
    </subcellularLocation>
</comment>
<comment type="similarity">
    <text evidence="2">Belongs to the universal ribosomal protein uL14 family.</text>
</comment>
<proteinExistence type="evidence at transcript level"/>
<accession>P62832</accession>
<accession>P23131</accession>
<accession>P24048</accession>
<accession>Q29246</accession>